<dbReference type="EC" id="1.-.-.-" evidence="1"/>
<dbReference type="EMBL" id="AP008229">
    <property type="protein sequence ID" value="BAE70778.1"/>
    <property type="molecule type" value="Genomic_DNA"/>
</dbReference>
<dbReference type="RefSeq" id="WP_011409633.1">
    <property type="nucleotide sequence ID" value="NC_007705.1"/>
</dbReference>
<dbReference type="SMR" id="Q2NY49"/>
<dbReference type="KEGG" id="xom:XOO4023"/>
<dbReference type="HOGENOM" id="CLU_084441_0_0_6"/>
<dbReference type="GO" id="GO:0016491">
    <property type="term" value="F:oxidoreductase activity"/>
    <property type="evidence" value="ECO:0007669"/>
    <property type="project" value="UniProtKB-UniRule"/>
</dbReference>
<dbReference type="CDD" id="cd02148">
    <property type="entry name" value="RutE-like"/>
    <property type="match status" value="1"/>
</dbReference>
<dbReference type="Gene3D" id="3.40.109.10">
    <property type="entry name" value="NADH Oxidase"/>
    <property type="match status" value="1"/>
</dbReference>
<dbReference type="HAMAP" id="MF_01204">
    <property type="entry name" value="Oxidoreductase_RutE_HadB"/>
    <property type="match status" value="1"/>
</dbReference>
<dbReference type="InterPro" id="IPR029479">
    <property type="entry name" value="Nitroreductase"/>
</dbReference>
<dbReference type="InterPro" id="IPR000415">
    <property type="entry name" value="Nitroreductase-like"/>
</dbReference>
<dbReference type="InterPro" id="IPR050461">
    <property type="entry name" value="Nitroreductase_HadB/RutE"/>
</dbReference>
<dbReference type="InterPro" id="IPR023936">
    <property type="entry name" value="RutE-like"/>
</dbReference>
<dbReference type="NCBIfam" id="NF003768">
    <property type="entry name" value="PRK05365.1"/>
    <property type="match status" value="1"/>
</dbReference>
<dbReference type="PANTHER" id="PTHR43543">
    <property type="entry name" value="MALONIC SEMIALDEHYDE REDUCTASE RUTE-RELATED"/>
    <property type="match status" value="1"/>
</dbReference>
<dbReference type="PANTHER" id="PTHR43543:SF1">
    <property type="entry name" value="MALONIC SEMIALDEHYDE REDUCTASE RUTE-RELATED"/>
    <property type="match status" value="1"/>
</dbReference>
<dbReference type="Pfam" id="PF00881">
    <property type="entry name" value="Nitroreductase"/>
    <property type="match status" value="1"/>
</dbReference>
<dbReference type="SUPFAM" id="SSF55469">
    <property type="entry name" value="FMN-dependent nitroreductase-like"/>
    <property type="match status" value="1"/>
</dbReference>
<evidence type="ECO:0000255" key="1">
    <source>
        <dbReference type="HAMAP-Rule" id="MF_01204"/>
    </source>
</evidence>
<organism>
    <name type="scientific">Xanthomonas oryzae pv. oryzae (strain MAFF 311018)</name>
    <dbReference type="NCBI Taxonomy" id="342109"/>
    <lineage>
        <taxon>Bacteria</taxon>
        <taxon>Pseudomonadati</taxon>
        <taxon>Pseudomonadota</taxon>
        <taxon>Gammaproteobacteria</taxon>
        <taxon>Lysobacterales</taxon>
        <taxon>Lysobacteraceae</taxon>
        <taxon>Xanthomonas</taxon>
    </lineage>
</organism>
<name>Y4023_XANOM</name>
<keyword id="KW-0285">Flavoprotein</keyword>
<keyword id="KW-0288">FMN</keyword>
<keyword id="KW-0520">NAD</keyword>
<keyword id="KW-0521">NADP</keyword>
<keyword id="KW-0560">Oxidoreductase</keyword>
<protein>
    <recommendedName>
        <fullName evidence="1">Putative NADH dehydrogenase/NAD(P)H nitroreductase XOO4023</fullName>
        <ecNumber evidence="1">1.-.-.-</ecNumber>
    </recommendedName>
</protein>
<sequence length="196" mass="21036">MSDSLNAAALDQLFRTARTQNAFADTPVSQEVLRELYELVKWGPTAANSGPARFVFVTSADGKARLKPALSEGNAAKTLAAPVTVIVAHDEDFHEKLPYLFPHADAKSWFDGPREGRAESAFRNGSLQGAYLILAARALGLDAGPMSGFDNAKVDAAFFAGTPIKSNFLVNLGYGDPAGLFPRSPRLSFDEAARFE</sequence>
<feature type="chain" id="PRO_1000066151" description="Putative NADH dehydrogenase/NAD(P)H nitroreductase XOO4023">
    <location>
        <begin position="1"/>
        <end position="196"/>
    </location>
</feature>
<comment type="cofactor">
    <cofactor evidence="1">
        <name>FMN</name>
        <dbReference type="ChEBI" id="CHEBI:58210"/>
    </cofactor>
</comment>
<comment type="similarity">
    <text evidence="1">Belongs to the nitroreductase family. HadB/RutE subfamily.</text>
</comment>
<reference key="1">
    <citation type="journal article" date="2005" name="Jpn. Agric. Res. Q.">
        <title>Genome sequence of Xanthomonas oryzae pv. oryzae suggests contribution of large numbers of effector genes and insertion sequences to its race diversity.</title>
        <authorList>
            <person name="Ochiai H."/>
            <person name="Inoue Y."/>
            <person name="Takeya M."/>
            <person name="Sasaki A."/>
            <person name="Kaku H."/>
        </authorList>
    </citation>
    <scope>NUCLEOTIDE SEQUENCE [LARGE SCALE GENOMIC DNA]</scope>
    <source>
        <strain>MAFF 311018</strain>
    </source>
</reference>
<proteinExistence type="inferred from homology"/>
<accession>Q2NY49</accession>
<gene>
    <name type="ordered locus">XOO4023</name>
</gene>